<reference key="1">
    <citation type="journal article" date="2007" name="ISME J.">
        <title>Population level functional diversity in a microbial community revealed by comparative genomic and metagenomic analyses.</title>
        <authorList>
            <person name="Bhaya D."/>
            <person name="Grossman A.R."/>
            <person name="Steunou A.-S."/>
            <person name="Khuri N."/>
            <person name="Cohan F.M."/>
            <person name="Hamamura N."/>
            <person name="Melendrez M.C."/>
            <person name="Bateson M.M."/>
            <person name="Ward D.M."/>
            <person name="Heidelberg J.F."/>
        </authorList>
    </citation>
    <scope>NUCLEOTIDE SEQUENCE [LARGE SCALE GENOMIC DNA]</scope>
    <source>
        <strain>JA-2-3B'a(2-13)</strain>
    </source>
</reference>
<sequence>MLKREEVQHVAHLARLELTEEEEIQFTEQLTDILAYVEQLKELDTEGVEPTFHVLDMELPTRPDEVEPYPDIEGILANAPDRADMFFKVPRILEGED</sequence>
<dbReference type="EC" id="6.3.5.-" evidence="1"/>
<dbReference type="EMBL" id="CP000240">
    <property type="protein sequence ID" value="ABD03162.1"/>
    <property type="molecule type" value="Genomic_DNA"/>
</dbReference>
<dbReference type="RefSeq" id="WP_011433797.1">
    <property type="nucleotide sequence ID" value="NC_007776.1"/>
</dbReference>
<dbReference type="SMR" id="Q2JJK5"/>
<dbReference type="STRING" id="321332.CYB_2217"/>
<dbReference type="KEGG" id="cyb:CYB_2217"/>
<dbReference type="eggNOG" id="COG0721">
    <property type="taxonomic scope" value="Bacteria"/>
</dbReference>
<dbReference type="HOGENOM" id="CLU_105899_2_0_3"/>
<dbReference type="OrthoDB" id="9813938at2"/>
<dbReference type="Proteomes" id="UP000001938">
    <property type="component" value="Chromosome"/>
</dbReference>
<dbReference type="GO" id="GO:0050566">
    <property type="term" value="F:asparaginyl-tRNA synthase (glutamine-hydrolyzing) activity"/>
    <property type="evidence" value="ECO:0007669"/>
    <property type="project" value="RHEA"/>
</dbReference>
<dbReference type="GO" id="GO:0005524">
    <property type="term" value="F:ATP binding"/>
    <property type="evidence" value="ECO:0007669"/>
    <property type="project" value="UniProtKB-KW"/>
</dbReference>
<dbReference type="GO" id="GO:0050567">
    <property type="term" value="F:glutaminyl-tRNA synthase (glutamine-hydrolyzing) activity"/>
    <property type="evidence" value="ECO:0007669"/>
    <property type="project" value="UniProtKB-UniRule"/>
</dbReference>
<dbReference type="GO" id="GO:0070681">
    <property type="term" value="P:glutaminyl-tRNAGln biosynthesis via transamidation"/>
    <property type="evidence" value="ECO:0007669"/>
    <property type="project" value="TreeGrafter"/>
</dbReference>
<dbReference type="GO" id="GO:0006450">
    <property type="term" value="P:regulation of translational fidelity"/>
    <property type="evidence" value="ECO:0007669"/>
    <property type="project" value="InterPro"/>
</dbReference>
<dbReference type="GO" id="GO:0006412">
    <property type="term" value="P:translation"/>
    <property type="evidence" value="ECO:0007669"/>
    <property type="project" value="UniProtKB-UniRule"/>
</dbReference>
<dbReference type="Gene3D" id="1.10.20.60">
    <property type="entry name" value="Glu-tRNAGln amidotransferase C subunit, N-terminal domain"/>
    <property type="match status" value="1"/>
</dbReference>
<dbReference type="HAMAP" id="MF_00122">
    <property type="entry name" value="GatC"/>
    <property type="match status" value="1"/>
</dbReference>
<dbReference type="InterPro" id="IPR036113">
    <property type="entry name" value="Asp/Glu-ADT_sf_sub_c"/>
</dbReference>
<dbReference type="InterPro" id="IPR003837">
    <property type="entry name" value="GatC"/>
</dbReference>
<dbReference type="NCBIfam" id="TIGR00135">
    <property type="entry name" value="gatC"/>
    <property type="match status" value="1"/>
</dbReference>
<dbReference type="PANTHER" id="PTHR15004">
    <property type="entry name" value="GLUTAMYL-TRNA(GLN) AMIDOTRANSFERASE SUBUNIT C, MITOCHONDRIAL"/>
    <property type="match status" value="1"/>
</dbReference>
<dbReference type="PANTHER" id="PTHR15004:SF0">
    <property type="entry name" value="GLUTAMYL-TRNA(GLN) AMIDOTRANSFERASE SUBUNIT C, MITOCHONDRIAL"/>
    <property type="match status" value="1"/>
</dbReference>
<dbReference type="Pfam" id="PF02686">
    <property type="entry name" value="GatC"/>
    <property type="match status" value="1"/>
</dbReference>
<dbReference type="SUPFAM" id="SSF141000">
    <property type="entry name" value="Glu-tRNAGln amidotransferase C subunit"/>
    <property type="match status" value="1"/>
</dbReference>
<evidence type="ECO:0000255" key="1">
    <source>
        <dbReference type="HAMAP-Rule" id="MF_00122"/>
    </source>
</evidence>
<name>GATC_SYNJB</name>
<comment type="function">
    <text evidence="1">Allows the formation of correctly charged Asn-tRNA(Asn) or Gln-tRNA(Gln) through the transamidation of misacylated Asp-tRNA(Asn) or Glu-tRNA(Gln) in organisms which lack either or both of asparaginyl-tRNA or glutaminyl-tRNA synthetases. The reaction takes place in the presence of glutamine and ATP through an activated phospho-Asp-tRNA(Asn) or phospho-Glu-tRNA(Gln).</text>
</comment>
<comment type="catalytic activity">
    <reaction evidence="1">
        <text>L-glutamyl-tRNA(Gln) + L-glutamine + ATP + H2O = L-glutaminyl-tRNA(Gln) + L-glutamate + ADP + phosphate + H(+)</text>
        <dbReference type="Rhea" id="RHEA:17521"/>
        <dbReference type="Rhea" id="RHEA-COMP:9681"/>
        <dbReference type="Rhea" id="RHEA-COMP:9684"/>
        <dbReference type="ChEBI" id="CHEBI:15377"/>
        <dbReference type="ChEBI" id="CHEBI:15378"/>
        <dbReference type="ChEBI" id="CHEBI:29985"/>
        <dbReference type="ChEBI" id="CHEBI:30616"/>
        <dbReference type="ChEBI" id="CHEBI:43474"/>
        <dbReference type="ChEBI" id="CHEBI:58359"/>
        <dbReference type="ChEBI" id="CHEBI:78520"/>
        <dbReference type="ChEBI" id="CHEBI:78521"/>
        <dbReference type="ChEBI" id="CHEBI:456216"/>
    </reaction>
</comment>
<comment type="catalytic activity">
    <reaction evidence="1">
        <text>L-aspartyl-tRNA(Asn) + L-glutamine + ATP + H2O = L-asparaginyl-tRNA(Asn) + L-glutamate + ADP + phosphate + 2 H(+)</text>
        <dbReference type="Rhea" id="RHEA:14513"/>
        <dbReference type="Rhea" id="RHEA-COMP:9674"/>
        <dbReference type="Rhea" id="RHEA-COMP:9677"/>
        <dbReference type="ChEBI" id="CHEBI:15377"/>
        <dbReference type="ChEBI" id="CHEBI:15378"/>
        <dbReference type="ChEBI" id="CHEBI:29985"/>
        <dbReference type="ChEBI" id="CHEBI:30616"/>
        <dbReference type="ChEBI" id="CHEBI:43474"/>
        <dbReference type="ChEBI" id="CHEBI:58359"/>
        <dbReference type="ChEBI" id="CHEBI:78515"/>
        <dbReference type="ChEBI" id="CHEBI:78516"/>
        <dbReference type="ChEBI" id="CHEBI:456216"/>
    </reaction>
</comment>
<comment type="subunit">
    <text evidence="1">Heterotrimer of A, B and C subunits.</text>
</comment>
<comment type="similarity">
    <text evidence="1">Belongs to the GatC family.</text>
</comment>
<gene>
    <name evidence="1" type="primary">gatC</name>
    <name type="ordered locus">CYB_2217</name>
</gene>
<protein>
    <recommendedName>
        <fullName evidence="1">Aspartyl/glutamyl-tRNA(Asn/Gln) amidotransferase subunit C</fullName>
        <shortName evidence="1">Asp/Glu-ADT subunit C</shortName>
        <ecNumber evidence="1">6.3.5.-</ecNumber>
    </recommendedName>
</protein>
<organism>
    <name type="scientific">Synechococcus sp. (strain JA-2-3B'a(2-13))</name>
    <name type="common">Cyanobacteria bacterium Yellowstone B-Prime</name>
    <dbReference type="NCBI Taxonomy" id="321332"/>
    <lineage>
        <taxon>Bacteria</taxon>
        <taxon>Bacillati</taxon>
        <taxon>Cyanobacteriota</taxon>
        <taxon>Cyanophyceae</taxon>
        <taxon>Synechococcales</taxon>
        <taxon>Synechococcaceae</taxon>
        <taxon>Synechococcus</taxon>
    </lineage>
</organism>
<proteinExistence type="inferred from homology"/>
<keyword id="KW-0067">ATP-binding</keyword>
<keyword id="KW-0436">Ligase</keyword>
<keyword id="KW-0547">Nucleotide-binding</keyword>
<keyword id="KW-0648">Protein biosynthesis</keyword>
<keyword id="KW-1185">Reference proteome</keyword>
<accession>Q2JJK5</accession>
<feature type="chain" id="PRO_1000016230" description="Aspartyl/glutamyl-tRNA(Asn/Gln) amidotransferase subunit C">
    <location>
        <begin position="1"/>
        <end position="97"/>
    </location>
</feature>